<organism>
    <name type="scientific">Enterobacteria phage T4</name>
    <name type="common">Bacteriophage T4</name>
    <dbReference type="NCBI Taxonomy" id="10665"/>
    <lineage>
        <taxon>Viruses</taxon>
        <taxon>Duplodnaviria</taxon>
        <taxon>Heunggongvirae</taxon>
        <taxon>Uroviricota</taxon>
        <taxon>Caudoviricetes</taxon>
        <taxon>Straboviridae</taxon>
        <taxon>Tevenvirinae</taxon>
        <taxon>Tequatrovirus</taxon>
    </lineage>
</organism>
<organismHost>
    <name type="scientific">Escherichia coli</name>
    <dbReference type="NCBI Taxonomy" id="562"/>
</organismHost>
<keyword id="KW-1185">Reference proteome</keyword>
<proteinExistence type="predicted"/>
<accession>P13315</accession>
<reference key="1">
    <citation type="journal article" date="1986" name="Nucleic Acids Res.">
        <title>Nucleotide sequence and analysis of the 58.3 to 65.5-kb early region of bacteriophage T4.</title>
        <authorList>
            <person name="Valerie K."/>
            <person name="Stevens J."/>
            <person name="Lynch M."/>
            <person name="Henderson E.E."/>
            <person name="de Riel J.K."/>
        </authorList>
    </citation>
    <scope>NUCLEOTIDE SEQUENCE [GENOMIC DNA]</scope>
</reference>
<reference key="2">
    <citation type="journal article" date="2003" name="Microbiol. Mol. Biol. Rev.">
        <title>Bacteriophage T4 genome.</title>
        <authorList>
            <person name="Miller E.S."/>
            <person name="Kutter E."/>
            <person name="Mosig G."/>
            <person name="Arisaka F."/>
            <person name="Kunisawa T."/>
            <person name="Ruger W."/>
        </authorList>
    </citation>
    <scope>NUCLEOTIDE SEQUENCE [LARGE SCALE GENOMIC DNA]</scope>
</reference>
<name>Y06H_BPT4</name>
<dbReference type="EMBL" id="X04567">
    <property type="protein sequence ID" value="CAA28224.1"/>
    <property type="molecule type" value="Genomic_DNA"/>
</dbReference>
<dbReference type="EMBL" id="AF158101">
    <property type="protein sequence ID" value="AAD42675.1"/>
    <property type="molecule type" value="Genomic_DNA"/>
</dbReference>
<dbReference type="RefSeq" id="NP_049729.1">
    <property type="nucleotide sequence ID" value="NC_000866.4"/>
</dbReference>
<dbReference type="SMR" id="P13315"/>
<dbReference type="GeneID" id="1258660"/>
<dbReference type="KEGG" id="vg:1258660"/>
<dbReference type="Proteomes" id="UP000009087">
    <property type="component" value="Segment"/>
</dbReference>
<feature type="chain" id="PRO_0000165140" description="Uncharacterized 6.6 kDa protein in regB-denV intergenic region">
    <location>
        <begin position="1"/>
        <end position="58"/>
    </location>
</feature>
<protein>
    <recommendedName>
        <fullName>Uncharacterized 6.6 kDa protein in regB-denV intergenic region</fullName>
    </recommendedName>
</protein>
<sequence>MAKIIIEGSEDVLNAFASGLVTQANSNLMKRGIWVILMEFILRQKFLFKAMAFMNLFV</sequence>
<gene>
    <name type="primary">y06H</name>
    <name type="synonym">62.7</name>
    <name type="synonym">vs.5</name>
</gene>